<evidence type="ECO:0000255" key="1">
    <source>
        <dbReference type="HAMAP-Rule" id="MF_00432"/>
    </source>
</evidence>
<feature type="chain" id="PRO_0000355390" description="Cytochrome b6-f complex subunit 5">
    <location>
        <begin position="1"/>
        <end position="37"/>
    </location>
</feature>
<feature type="transmembrane region" description="Helical" evidence="1">
    <location>
        <begin position="5"/>
        <end position="25"/>
    </location>
</feature>
<dbReference type="EMBL" id="EF115541">
    <property type="protein sequence ID" value="ABK79431.1"/>
    <property type="molecule type" value="Genomic_DNA"/>
</dbReference>
<dbReference type="RefSeq" id="YP_010144443.1">
    <property type="nucleotide sequence ID" value="NC_056985.1"/>
</dbReference>
<dbReference type="RefSeq" id="YP_874671.1">
    <property type="nucleotide sequence ID" value="NC_008590.1"/>
</dbReference>
<dbReference type="SMR" id="A1E9K9"/>
<dbReference type="GeneID" id="4525057"/>
<dbReference type="GeneID" id="67140654"/>
<dbReference type="GO" id="GO:0009535">
    <property type="term" value="C:chloroplast thylakoid membrane"/>
    <property type="evidence" value="ECO:0007669"/>
    <property type="project" value="UniProtKB-SubCell"/>
</dbReference>
<dbReference type="GO" id="GO:0009512">
    <property type="term" value="C:cytochrome b6f complex"/>
    <property type="evidence" value="ECO:0007669"/>
    <property type="project" value="InterPro"/>
</dbReference>
<dbReference type="GO" id="GO:0045158">
    <property type="term" value="F:electron transporter, transferring electrons within cytochrome b6/f complex of photosystem II activity"/>
    <property type="evidence" value="ECO:0007669"/>
    <property type="project" value="UniProtKB-UniRule"/>
</dbReference>
<dbReference type="GO" id="GO:0017004">
    <property type="term" value="P:cytochrome complex assembly"/>
    <property type="evidence" value="ECO:0007669"/>
    <property type="project" value="UniProtKB-UniRule"/>
</dbReference>
<dbReference type="GO" id="GO:0015979">
    <property type="term" value="P:photosynthesis"/>
    <property type="evidence" value="ECO:0007669"/>
    <property type="project" value="UniProtKB-KW"/>
</dbReference>
<dbReference type="HAMAP" id="MF_00432">
    <property type="entry name" value="Cytb6_f_PetG"/>
    <property type="match status" value="1"/>
</dbReference>
<dbReference type="InterPro" id="IPR003683">
    <property type="entry name" value="Cyt_6/f_cplx_su5"/>
</dbReference>
<dbReference type="InterPro" id="IPR036099">
    <property type="entry name" value="Cyt_6/f_cplx_su5_sf"/>
</dbReference>
<dbReference type="NCBIfam" id="NF001907">
    <property type="entry name" value="PRK00665.1"/>
    <property type="match status" value="1"/>
</dbReference>
<dbReference type="Pfam" id="PF02529">
    <property type="entry name" value="PetG"/>
    <property type="match status" value="1"/>
</dbReference>
<dbReference type="PIRSF" id="PIRSF000034">
    <property type="entry name" value="Cyt_b6-f_V"/>
    <property type="match status" value="1"/>
</dbReference>
<dbReference type="SUPFAM" id="SSF103446">
    <property type="entry name" value="PetG subunit of the cytochrome b6f complex"/>
    <property type="match status" value="1"/>
</dbReference>
<name>PETG_HORVU</name>
<geneLocation type="chloroplast"/>
<proteinExistence type="inferred from homology"/>
<accession>A1E9K9</accession>
<organism>
    <name type="scientific">Hordeum vulgare</name>
    <name type="common">Barley</name>
    <dbReference type="NCBI Taxonomy" id="4513"/>
    <lineage>
        <taxon>Eukaryota</taxon>
        <taxon>Viridiplantae</taxon>
        <taxon>Streptophyta</taxon>
        <taxon>Embryophyta</taxon>
        <taxon>Tracheophyta</taxon>
        <taxon>Spermatophyta</taxon>
        <taxon>Magnoliopsida</taxon>
        <taxon>Liliopsida</taxon>
        <taxon>Poales</taxon>
        <taxon>Poaceae</taxon>
        <taxon>BOP clade</taxon>
        <taxon>Pooideae</taxon>
        <taxon>Triticodae</taxon>
        <taxon>Triticeae</taxon>
        <taxon>Hordeinae</taxon>
        <taxon>Hordeum</taxon>
    </lineage>
</organism>
<sequence>MIEVFLFGIVLGLIPITLAGLFVTAYLQYRRGDQLDL</sequence>
<protein>
    <recommendedName>
        <fullName evidence="1">Cytochrome b6-f complex subunit 5</fullName>
    </recommendedName>
    <alternativeName>
        <fullName evidence="1">Cytochrome b6-f complex subunit PetG</fullName>
    </alternativeName>
    <alternativeName>
        <fullName evidence="1">Cytochrome b6-f complex subunit V</fullName>
    </alternativeName>
</protein>
<keyword id="KW-0150">Chloroplast</keyword>
<keyword id="KW-0249">Electron transport</keyword>
<keyword id="KW-0472">Membrane</keyword>
<keyword id="KW-0602">Photosynthesis</keyword>
<keyword id="KW-0934">Plastid</keyword>
<keyword id="KW-0793">Thylakoid</keyword>
<keyword id="KW-0812">Transmembrane</keyword>
<keyword id="KW-1133">Transmembrane helix</keyword>
<keyword id="KW-0813">Transport</keyword>
<comment type="function">
    <text evidence="1">Component of the cytochrome b6-f complex, which mediates electron transfer between photosystem II (PSII) and photosystem I (PSI), cyclic electron flow around PSI, and state transitions. PetG is required for either the stability or assembly of the cytochrome b6-f complex.</text>
</comment>
<comment type="subunit">
    <text evidence="1">The 4 large subunits of the cytochrome b6-f complex are cytochrome b6, subunit IV (17 kDa polypeptide, PetD), cytochrome f and the Rieske protein, while the 4 small subunits are PetG, PetL, PetM and PetN. The complex functions as a dimer.</text>
</comment>
<comment type="subcellular location">
    <subcellularLocation>
        <location evidence="1">Plastid</location>
        <location evidence="1">Chloroplast thylakoid membrane</location>
        <topology evidence="1">Single-pass membrane protein</topology>
    </subcellularLocation>
</comment>
<comment type="similarity">
    <text evidence="1">Belongs to the PetG family.</text>
</comment>
<gene>
    <name evidence="1" type="primary">petG</name>
</gene>
<reference key="1">
    <citation type="journal article" date="2007" name="Theor. Appl. Genet.">
        <title>Complete chloroplast genome sequences of Hordeum vulgare, Sorghum bicolor and Agrostis stolonifera, and comparative analyses with other grass genomes.</title>
        <authorList>
            <person name="Saski C."/>
            <person name="Lee S.-B."/>
            <person name="Fjellheim S."/>
            <person name="Guda C."/>
            <person name="Jansen R.K."/>
            <person name="Luo H."/>
            <person name="Tomkins J."/>
            <person name="Rognli O.A."/>
            <person name="Daniell H."/>
            <person name="Clarke J.L."/>
        </authorList>
    </citation>
    <scope>NUCLEOTIDE SEQUENCE [LARGE SCALE GENOMIC DNA]</scope>
    <source>
        <strain>cv. Morex</strain>
    </source>
</reference>